<feature type="chain" id="PRO_0000072351" description="Mating-type switching protein swi5">
    <location>
        <begin position="1"/>
        <end position="85"/>
    </location>
</feature>
<feature type="helix" evidence="3">
    <location>
        <begin position="3"/>
        <end position="29"/>
    </location>
</feature>
<feature type="strand" evidence="3">
    <location>
        <begin position="32"/>
        <end position="34"/>
    </location>
</feature>
<feature type="helix" evidence="3">
    <location>
        <begin position="36"/>
        <end position="67"/>
    </location>
</feature>
<feature type="helix" evidence="3">
    <location>
        <begin position="72"/>
        <end position="75"/>
    </location>
</feature>
<feature type="helix" evidence="3">
    <location>
        <begin position="76"/>
        <end position="79"/>
    </location>
</feature>
<comment type="function">
    <text evidence="1">Required for normal mating-type switching. Also involved in the rhp51-dependent recombination DNA repair pathway.</text>
</comment>
<comment type="subunit">
    <text evidence="1">Interacts with sfr1 and rhp51 during DNA repair. Interacts with swi2 and rhp51 during mating-type switching.</text>
</comment>
<comment type="interaction">
    <interactant intactId="EBI-926902">
        <id>Q9UUB7</id>
    </interactant>
    <interactant intactId="EBI-927233">
        <id>Q9USV1</id>
        <label>sfr1</label>
    </interactant>
    <organismsDiffer>false</organismsDiffer>
    <experiments>17</experiments>
</comment>
<comment type="interaction">
    <interactant intactId="EBI-926902">
        <id>Q9UUB7</id>
    </interactant>
    <interactant intactId="EBI-926914">
        <id>Q10668</id>
        <label>swi2</label>
    </interactant>
    <organismsDiffer>false</organismsDiffer>
    <experiments>5</experiments>
</comment>
<comment type="interaction">
    <interactant intactId="EBI-926902">
        <id>Q9UUB7</id>
    </interactant>
    <interactant intactId="EBI-926902">
        <id>Q9UUB7</id>
        <label>swi5</label>
    </interactant>
    <organismsDiffer>false</organismsDiffer>
    <experiments>2</experiments>
</comment>
<comment type="similarity">
    <text evidence="2">Belongs to the SWI5/SAE3 family.</text>
</comment>
<name>SWI5_SCHPO</name>
<reference key="1">
    <citation type="journal article" date="2003" name="Proc. Natl. Acad. Sci. U.S.A.">
        <title>Two different Swi5-containing protein complexes are involved in mating-type switching and recombination repair in fission yeast.</title>
        <authorList>
            <person name="Akamatsu Y."/>
            <person name="Dziadkowiec D."/>
            <person name="Ikeguchi M."/>
            <person name="Shinagawa H."/>
            <person name="Iwasaki H."/>
        </authorList>
    </citation>
    <scope>NUCLEOTIDE SEQUENCE [MRNA]</scope>
    <scope>FUNCTION</scope>
    <scope>INTERACTION WITH SFR1; SWI2 AND RHP51</scope>
</reference>
<reference key="2">
    <citation type="journal article" date="2002" name="Nature">
        <title>The genome sequence of Schizosaccharomyces pombe.</title>
        <authorList>
            <person name="Wood V."/>
            <person name="Gwilliam R."/>
            <person name="Rajandream M.A."/>
            <person name="Lyne M.H."/>
            <person name="Lyne R."/>
            <person name="Stewart A."/>
            <person name="Sgouros J.G."/>
            <person name="Peat N."/>
            <person name="Hayles J."/>
            <person name="Baker S.G."/>
            <person name="Basham D."/>
            <person name="Bowman S."/>
            <person name="Brooks K."/>
            <person name="Brown D."/>
            <person name="Brown S."/>
            <person name="Chillingworth T."/>
            <person name="Churcher C.M."/>
            <person name="Collins M."/>
            <person name="Connor R."/>
            <person name="Cronin A."/>
            <person name="Davis P."/>
            <person name="Feltwell T."/>
            <person name="Fraser A."/>
            <person name="Gentles S."/>
            <person name="Goble A."/>
            <person name="Hamlin N."/>
            <person name="Harris D.E."/>
            <person name="Hidalgo J."/>
            <person name="Hodgson G."/>
            <person name="Holroyd S."/>
            <person name="Hornsby T."/>
            <person name="Howarth S."/>
            <person name="Huckle E.J."/>
            <person name="Hunt S."/>
            <person name="Jagels K."/>
            <person name="James K.D."/>
            <person name="Jones L."/>
            <person name="Jones M."/>
            <person name="Leather S."/>
            <person name="McDonald S."/>
            <person name="McLean J."/>
            <person name="Mooney P."/>
            <person name="Moule S."/>
            <person name="Mungall K.L."/>
            <person name="Murphy L.D."/>
            <person name="Niblett D."/>
            <person name="Odell C."/>
            <person name="Oliver K."/>
            <person name="O'Neil S."/>
            <person name="Pearson D."/>
            <person name="Quail M.A."/>
            <person name="Rabbinowitsch E."/>
            <person name="Rutherford K.M."/>
            <person name="Rutter S."/>
            <person name="Saunders D."/>
            <person name="Seeger K."/>
            <person name="Sharp S."/>
            <person name="Skelton J."/>
            <person name="Simmonds M.N."/>
            <person name="Squares R."/>
            <person name="Squares S."/>
            <person name="Stevens K."/>
            <person name="Taylor K."/>
            <person name="Taylor R.G."/>
            <person name="Tivey A."/>
            <person name="Walsh S.V."/>
            <person name="Warren T."/>
            <person name="Whitehead S."/>
            <person name="Woodward J.R."/>
            <person name="Volckaert G."/>
            <person name="Aert R."/>
            <person name="Robben J."/>
            <person name="Grymonprez B."/>
            <person name="Weltjens I."/>
            <person name="Vanstreels E."/>
            <person name="Rieger M."/>
            <person name="Schaefer M."/>
            <person name="Mueller-Auer S."/>
            <person name="Gabel C."/>
            <person name="Fuchs M."/>
            <person name="Duesterhoeft A."/>
            <person name="Fritzc C."/>
            <person name="Holzer E."/>
            <person name="Moestl D."/>
            <person name="Hilbert H."/>
            <person name="Borzym K."/>
            <person name="Langer I."/>
            <person name="Beck A."/>
            <person name="Lehrach H."/>
            <person name="Reinhardt R."/>
            <person name="Pohl T.M."/>
            <person name="Eger P."/>
            <person name="Zimmermann W."/>
            <person name="Wedler H."/>
            <person name="Wambutt R."/>
            <person name="Purnelle B."/>
            <person name="Goffeau A."/>
            <person name="Cadieu E."/>
            <person name="Dreano S."/>
            <person name="Gloux S."/>
            <person name="Lelaure V."/>
            <person name="Mottier S."/>
            <person name="Galibert F."/>
            <person name="Aves S.J."/>
            <person name="Xiang Z."/>
            <person name="Hunt C."/>
            <person name="Moore K."/>
            <person name="Hurst S.M."/>
            <person name="Lucas M."/>
            <person name="Rochet M."/>
            <person name="Gaillardin C."/>
            <person name="Tallada V.A."/>
            <person name="Garzon A."/>
            <person name="Thode G."/>
            <person name="Daga R.R."/>
            <person name="Cruzado L."/>
            <person name="Jimenez J."/>
            <person name="Sanchez M."/>
            <person name="del Rey F."/>
            <person name="Benito J."/>
            <person name="Dominguez A."/>
            <person name="Revuelta J.L."/>
            <person name="Moreno S."/>
            <person name="Armstrong J."/>
            <person name="Forsburg S.L."/>
            <person name="Cerutti L."/>
            <person name="Lowe T."/>
            <person name="McCombie W.R."/>
            <person name="Paulsen I."/>
            <person name="Potashkin J."/>
            <person name="Shpakovski G.V."/>
            <person name="Ussery D."/>
            <person name="Barrell B.G."/>
            <person name="Nurse P."/>
        </authorList>
    </citation>
    <scope>NUCLEOTIDE SEQUENCE [LARGE SCALE GENOMIC DNA]</scope>
    <source>
        <strain>972 / ATCC 24843</strain>
    </source>
</reference>
<gene>
    <name type="primary">swi5</name>
    <name type="ORF">SPBC409.03</name>
</gene>
<keyword id="KW-0002">3D-structure</keyword>
<keyword id="KW-0227">DNA damage</keyword>
<keyword id="KW-0234">DNA repair</keyword>
<keyword id="KW-1185">Reference proteome</keyword>
<protein>
    <recommendedName>
        <fullName>Mating-type switching protein swi5</fullName>
    </recommendedName>
    <alternativeName>
        <fullName>DNA repair protein swi5</fullName>
    </alternativeName>
</protein>
<evidence type="ECO:0000269" key="1">
    <source>
    </source>
</evidence>
<evidence type="ECO:0000305" key="2"/>
<evidence type="ECO:0007829" key="3">
    <source>
        <dbReference type="PDB" id="3VIQ"/>
    </source>
</evidence>
<sequence length="85" mass="9748">MEKSQLESRVHLLEQQKEQLESSLQDALAKLKNRDAKQTVQKHIDLLHTYNEIRDIALGMIGKVAEHEKCTSVELFDRFGVNGSE</sequence>
<organism>
    <name type="scientific">Schizosaccharomyces pombe (strain 972 / ATCC 24843)</name>
    <name type="common">Fission yeast</name>
    <dbReference type="NCBI Taxonomy" id="284812"/>
    <lineage>
        <taxon>Eukaryota</taxon>
        <taxon>Fungi</taxon>
        <taxon>Dikarya</taxon>
        <taxon>Ascomycota</taxon>
        <taxon>Taphrinomycotina</taxon>
        <taxon>Schizosaccharomycetes</taxon>
        <taxon>Schizosaccharomycetales</taxon>
        <taxon>Schizosaccharomycetaceae</taxon>
        <taxon>Schizosaccharomyces</taxon>
    </lineage>
</organism>
<proteinExistence type="evidence at protein level"/>
<dbReference type="EMBL" id="AB089498">
    <property type="protein sequence ID" value="BAC77071.1"/>
    <property type="molecule type" value="Genomic_DNA"/>
</dbReference>
<dbReference type="EMBL" id="AB089499">
    <property type="protein sequence ID" value="BAC77072.1"/>
    <property type="molecule type" value="mRNA"/>
</dbReference>
<dbReference type="EMBL" id="CU329671">
    <property type="protein sequence ID" value="CAB52605.1"/>
    <property type="molecule type" value="Genomic_DNA"/>
</dbReference>
<dbReference type="PIR" id="T40431">
    <property type="entry name" value="T40431"/>
</dbReference>
<dbReference type="RefSeq" id="NP_595453.1">
    <property type="nucleotide sequence ID" value="NM_001021363.2"/>
</dbReference>
<dbReference type="PDB" id="3VIQ">
    <property type="method" value="X-ray"/>
    <property type="resolution" value="2.20 A"/>
    <property type="chains" value="B/D=1-85"/>
</dbReference>
<dbReference type="PDB" id="3VIR">
    <property type="method" value="X-ray"/>
    <property type="resolution" value="2.70 A"/>
    <property type="chains" value="A/B/C/D=1-85"/>
</dbReference>
<dbReference type="PDBsum" id="3VIQ"/>
<dbReference type="PDBsum" id="3VIR"/>
<dbReference type="SMR" id="Q9UUB7"/>
<dbReference type="BioGRID" id="277101">
    <property type="interactions" value="25"/>
</dbReference>
<dbReference type="ComplexPortal" id="CPX-25785">
    <property type="entry name" value="SWI5-SWI2 mating-type switching complex"/>
</dbReference>
<dbReference type="ComplexPortal" id="CPX-8094">
    <property type="entry name" value="SWI5-SFR1 recombination accessory factor complex"/>
</dbReference>
<dbReference type="DIP" id="DIP-29233N"/>
<dbReference type="FunCoup" id="Q9UUB7">
    <property type="interactions" value="100"/>
</dbReference>
<dbReference type="IntAct" id="Q9UUB7">
    <property type="interactions" value="56"/>
</dbReference>
<dbReference type="STRING" id="284812.Q9UUB7"/>
<dbReference type="iPTMnet" id="Q9UUB7"/>
<dbReference type="PaxDb" id="4896-SPBC409.03.1"/>
<dbReference type="EnsemblFungi" id="SPBC409.03.1">
    <property type="protein sequence ID" value="SPBC409.03.1:pep"/>
    <property type="gene ID" value="SPBC409.03"/>
</dbReference>
<dbReference type="GeneID" id="2540574"/>
<dbReference type="KEGG" id="spo:2540574"/>
<dbReference type="PomBase" id="SPBC409.03">
    <property type="gene designation" value="swi5"/>
</dbReference>
<dbReference type="VEuPathDB" id="FungiDB:SPBC409.03"/>
<dbReference type="eggNOG" id="ENOG502SBQH">
    <property type="taxonomic scope" value="Eukaryota"/>
</dbReference>
<dbReference type="HOGENOM" id="CLU_106110_3_1_1"/>
<dbReference type="InParanoid" id="Q9UUB7"/>
<dbReference type="OMA" id="TTVKRHI"/>
<dbReference type="PhylomeDB" id="Q9UUB7"/>
<dbReference type="EvolutionaryTrace" id="Q9UUB7"/>
<dbReference type="PRO" id="PR:Q9UUB7"/>
<dbReference type="Proteomes" id="UP000002485">
    <property type="component" value="Chromosome II"/>
</dbReference>
<dbReference type="GO" id="GO:0031934">
    <property type="term" value="C:mating-type region heterochromatin"/>
    <property type="evidence" value="ECO:0000314"/>
    <property type="project" value="PomBase"/>
</dbReference>
<dbReference type="GO" id="GO:0005634">
    <property type="term" value="C:nucleus"/>
    <property type="evidence" value="ECO:0000314"/>
    <property type="project" value="PomBase"/>
</dbReference>
<dbReference type="GO" id="GO:0032798">
    <property type="term" value="C:Swi5-Sfr1 complex"/>
    <property type="evidence" value="ECO:0000314"/>
    <property type="project" value="PomBase"/>
</dbReference>
<dbReference type="GO" id="GO:0034974">
    <property type="term" value="C:Swi5-Swi2 complex"/>
    <property type="evidence" value="ECO:0000353"/>
    <property type="project" value="PomBase"/>
</dbReference>
<dbReference type="GO" id="GO:0001671">
    <property type="term" value="F:ATPase activator activity"/>
    <property type="evidence" value="ECO:0000314"/>
    <property type="project" value="PomBase"/>
</dbReference>
<dbReference type="GO" id="GO:0042802">
    <property type="term" value="F:identical protein binding"/>
    <property type="evidence" value="ECO:0000353"/>
    <property type="project" value="IntAct"/>
</dbReference>
<dbReference type="GO" id="GO:0000730">
    <property type="term" value="P:DNA recombinase assembly"/>
    <property type="evidence" value="ECO:0000314"/>
    <property type="project" value="PomBase"/>
</dbReference>
<dbReference type="GO" id="GO:0006310">
    <property type="term" value="P:DNA recombination"/>
    <property type="evidence" value="ECO:0000314"/>
    <property type="project" value="PomBase"/>
</dbReference>
<dbReference type="GO" id="GO:0042148">
    <property type="term" value="P:DNA strand invasion"/>
    <property type="evidence" value="ECO:0000314"/>
    <property type="project" value="PomBase"/>
</dbReference>
<dbReference type="GO" id="GO:0000724">
    <property type="term" value="P:double-strand break repair via homologous recombination"/>
    <property type="evidence" value="ECO:0000316"/>
    <property type="project" value="PomBase"/>
</dbReference>
<dbReference type="GO" id="GO:0007534">
    <property type="term" value="P:gene conversion at mating-type locus"/>
    <property type="evidence" value="ECO:0000314"/>
    <property type="project" value="PomBase"/>
</dbReference>
<dbReference type="GO" id="GO:0007533">
    <property type="term" value="P:mating type switching"/>
    <property type="evidence" value="ECO:0000315"/>
    <property type="project" value="PomBase"/>
</dbReference>
<dbReference type="GO" id="GO:0010772">
    <property type="term" value="P:meiotic DNA recombinase assembly involved in reciprocal meiotic recombination"/>
    <property type="evidence" value="ECO:0000314"/>
    <property type="project" value="PomBase"/>
</dbReference>
<dbReference type="GO" id="GO:0000709">
    <property type="term" value="P:meiotic joint molecule formation"/>
    <property type="evidence" value="ECO:0000314"/>
    <property type="project" value="PomBase"/>
</dbReference>
<dbReference type="GO" id="GO:0000708">
    <property type="term" value="P:meiotic strand invasion"/>
    <property type="evidence" value="ECO:0000314"/>
    <property type="project" value="PomBase"/>
</dbReference>
<dbReference type="FunFam" id="1.20.5.170:FF:000056">
    <property type="entry name" value="DNA repair protein SWI5 homolog"/>
    <property type="match status" value="1"/>
</dbReference>
<dbReference type="Gene3D" id="1.20.5.170">
    <property type="match status" value="1"/>
</dbReference>
<dbReference type="IDEAL" id="IID50105"/>
<dbReference type="InterPro" id="IPR010760">
    <property type="entry name" value="DNA-repair_Swi5"/>
</dbReference>
<dbReference type="PANTHER" id="PTHR28529">
    <property type="entry name" value="DNA REPAIR PROTEIN SWI5 HOMOLOG"/>
    <property type="match status" value="1"/>
</dbReference>
<dbReference type="PANTHER" id="PTHR28529:SF2">
    <property type="entry name" value="DNA REPAIR PROTEIN SWI5 HOMOLOG"/>
    <property type="match status" value="1"/>
</dbReference>
<dbReference type="Pfam" id="PF07061">
    <property type="entry name" value="Swi5"/>
    <property type="match status" value="1"/>
</dbReference>
<accession>Q9UUB7</accession>